<gene>
    <name evidence="1" type="primary">rplV</name>
    <name type="ordered locus">APL_1765</name>
</gene>
<protein>
    <recommendedName>
        <fullName evidence="1">Large ribosomal subunit protein uL22</fullName>
    </recommendedName>
    <alternativeName>
        <fullName evidence="2">50S ribosomal protein L22</fullName>
    </alternativeName>
</protein>
<accession>A3N363</accession>
<sequence length="110" mass="12134">METIAKHRYARTSAQKARLVADLIRGKKVAQALEILTFTNKKAAALVKKVLESAIANAEHNDGADVDDLKVAKIFVDEGPSMKRVMPRAKGRADRILKRTSHITVVVSDR</sequence>
<feature type="chain" id="PRO_1000052532" description="Large ribosomal subunit protein uL22">
    <location>
        <begin position="1"/>
        <end position="110"/>
    </location>
</feature>
<organism>
    <name type="scientific">Actinobacillus pleuropneumoniae serotype 5b (strain L20)</name>
    <dbReference type="NCBI Taxonomy" id="416269"/>
    <lineage>
        <taxon>Bacteria</taxon>
        <taxon>Pseudomonadati</taxon>
        <taxon>Pseudomonadota</taxon>
        <taxon>Gammaproteobacteria</taxon>
        <taxon>Pasteurellales</taxon>
        <taxon>Pasteurellaceae</taxon>
        <taxon>Actinobacillus</taxon>
    </lineage>
</organism>
<reference key="1">
    <citation type="journal article" date="2008" name="J. Bacteriol.">
        <title>The complete genome sequence of Actinobacillus pleuropneumoniae L20 (serotype 5b).</title>
        <authorList>
            <person name="Foote S.J."/>
            <person name="Bosse J.T."/>
            <person name="Bouevitch A.B."/>
            <person name="Langford P.R."/>
            <person name="Young N.M."/>
            <person name="Nash J.H.E."/>
        </authorList>
    </citation>
    <scope>NUCLEOTIDE SEQUENCE [LARGE SCALE GENOMIC DNA]</scope>
    <source>
        <strain>L20</strain>
    </source>
</reference>
<proteinExistence type="inferred from homology"/>
<name>RL22_ACTP2</name>
<dbReference type="EMBL" id="CP000569">
    <property type="protein sequence ID" value="ABN74849.1"/>
    <property type="molecule type" value="Genomic_DNA"/>
</dbReference>
<dbReference type="RefSeq" id="WP_005599292.1">
    <property type="nucleotide sequence ID" value="NC_009053.1"/>
</dbReference>
<dbReference type="SMR" id="A3N363"/>
<dbReference type="STRING" id="416269.APL_1765"/>
<dbReference type="EnsemblBacteria" id="ABN74849">
    <property type="protein sequence ID" value="ABN74849"/>
    <property type="gene ID" value="APL_1765"/>
</dbReference>
<dbReference type="GeneID" id="92743650"/>
<dbReference type="KEGG" id="apl:APL_1765"/>
<dbReference type="eggNOG" id="COG0091">
    <property type="taxonomic scope" value="Bacteria"/>
</dbReference>
<dbReference type="HOGENOM" id="CLU_083987_3_3_6"/>
<dbReference type="Proteomes" id="UP000001432">
    <property type="component" value="Chromosome"/>
</dbReference>
<dbReference type="GO" id="GO:0022625">
    <property type="term" value="C:cytosolic large ribosomal subunit"/>
    <property type="evidence" value="ECO:0007669"/>
    <property type="project" value="TreeGrafter"/>
</dbReference>
<dbReference type="GO" id="GO:0019843">
    <property type="term" value="F:rRNA binding"/>
    <property type="evidence" value="ECO:0007669"/>
    <property type="project" value="UniProtKB-UniRule"/>
</dbReference>
<dbReference type="GO" id="GO:0003735">
    <property type="term" value="F:structural constituent of ribosome"/>
    <property type="evidence" value="ECO:0007669"/>
    <property type="project" value="InterPro"/>
</dbReference>
<dbReference type="GO" id="GO:0006412">
    <property type="term" value="P:translation"/>
    <property type="evidence" value="ECO:0007669"/>
    <property type="project" value="UniProtKB-UniRule"/>
</dbReference>
<dbReference type="CDD" id="cd00336">
    <property type="entry name" value="Ribosomal_L22"/>
    <property type="match status" value="1"/>
</dbReference>
<dbReference type="FunFam" id="3.90.470.10:FF:000001">
    <property type="entry name" value="50S ribosomal protein L22"/>
    <property type="match status" value="1"/>
</dbReference>
<dbReference type="Gene3D" id="3.90.470.10">
    <property type="entry name" value="Ribosomal protein L22/L17"/>
    <property type="match status" value="1"/>
</dbReference>
<dbReference type="HAMAP" id="MF_01331_B">
    <property type="entry name" value="Ribosomal_uL22_B"/>
    <property type="match status" value="1"/>
</dbReference>
<dbReference type="InterPro" id="IPR001063">
    <property type="entry name" value="Ribosomal_uL22"/>
</dbReference>
<dbReference type="InterPro" id="IPR005727">
    <property type="entry name" value="Ribosomal_uL22_bac/chlpt-type"/>
</dbReference>
<dbReference type="InterPro" id="IPR047867">
    <property type="entry name" value="Ribosomal_uL22_bac/org-type"/>
</dbReference>
<dbReference type="InterPro" id="IPR018260">
    <property type="entry name" value="Ribosomal_uL22_CS"/>
</dbReference>
<dbReference type="InterPro" id="IPR036394">
    <property type="entry name" value="Ribosomal_uL22_sf"/>
</dbReference>
<dbReference type="NCBIfam" id="TIGR01044">
    <property type="entry name" value="rplV_bact"/>
    <property type="match status" value="1"/>
</dbReference>
<dbReference type="PANTHER" id="PTHR13501">
    <property type="entry name" value="CHLOROPLAST 50S RIBOSOMAL PROTEIN L22-RELATED"/>
    <property type="match status" value="1"/>
</dbReference>
<dbReference type="PANTHER" id="PTHR13501:SF8">
    <property type="entry name" value="LARGE RIBOSOMAL SUBUNIT PROTEIN UL22M"/>
    <property type="match status" value="1"/>
</dbReference>
<dbReference type="Pfam" id="PF00237">
    <property type="entry name" value="Ribosomal_L22"/>
    <property type="match status" value="1"/>
</dbReference>
<dbReference type="SUPFAM" id="SSF54843">
    <property type="entry name" value="Ribosomal protein L22"/>
    <property type="match status" value="1"/>
</dbReference>
<dbReference type="PROSITE" id="PS00464">
    <property type="entry name" value="RIBOSOMAL_L22"/>
    <property type="match status" value="1"/>
</dbReference>
<keyword id="KW-1185">Reference proteome</keyword>
<keyword id="KW-0687">Ribonucleoprotein</keyword>
<keyword id="KW-0689">Ribosomal protein</keyword>
<keyword id="KW-0694">RNA-binding</keyword>
<keyword id="KW-0699">rRNA-binding</keyword>
<evidence type="ECO:0000255" key="1">
    <source>
        <dbReference type="HAMAP-Rule" id="MF_01331"/>
    </source>
</evidence>
<evidence type="ECO:0000305" key="2"/>
<comment type="function">
    <text evidence="1">This protein binds specifically to 23S rRNA; its binding is stimulated by other ribosomal proteins, e.g. L4, L17, and L20. It is important during the early stages of 50S assembly. It makes multiple contacts with different domains of the 23S rRNA in the assembled 50S subunit and ribosome (By similarity).</text>
</comment>
<comment type="function">
    <text evidence="1">The globular domain of the protein is located near the polypeptide exit tunnel on the outside of the subunit, while an extended beta-hairpin is found that lines the wall of the exit tunnel in the center of the 70S ribosome.</text>
</comment>
<comment type="subunit">
    <text evidence="1">Part of the 50S ribosomal subunit.</text>
</comment>
<comment type="similarity">
    <text evidence="1">Belongs to the universal ribosomal protein uL22 family.</text>
</comment>